<feature type="chain" id="PRO_0000394325" description="Lysylphosphatidylglycerol biosynthesis bifunctional protein LysX">
    <location>
        <begin position="1"/>
        <end position="1111"/>
    </location>
</feature>
<feature type="transmembrane region" description="Helical" evidence="2">
    <location>
        <begin position="18"/>
        <end position="38"/>
    </location>
</feature>
<feature type="transmembrane region" description="Helical" evidence="2">
    <location>
        <begin position="60"/>
        <end position="80"/>
    </location>
</feature>
<feature type="transmembrane region" description="Helical" evidence="2">
    <location>
        <begin position="84"/>
        <end position="104"/>
    </location>
</feature>
<feature type="transmembrane region" description="Helical" evidence="2">
    <location>
        <begin position="118"/>
        <end position="138"/>
    </location>
</feature>
<feature type="transmembrane region" description="Helical" evidence="2">
    <location>
        <begin position="152"/>
        <end position="172"/>
    </location>
</feature>
<feature type="transmembrane region" description="Helical" evidence="2">
    <location>
        <begin position="209"/>
        <end position="229"/>
    </location>
</feature>
<feature type="transmembrane region" description="Helical" evidence="2">
    <location>
        <begin position="308"/>
        <end position="328"/>
    </location>
</feature>
<feature type="DNA-binding region" description="OB">
    <location>
        <begin position="674"/>
        <end position="747"/>
    </location>
</feature>
<feature type="region of interest" description="Phosphatidylglycerol lysyltransferase">
    <location>
        <begin position="1"/>
        <end position="612"/>
    </location>
</feature>
<feature type="region of interest" description="Lysine--tRNA ligase">
    <location>
        <begin position="613"/>
        <end position="1111"/>
    </location>
</feature>
<feature type="binding site" evidence="1">
    <location>
        <position position="1023"/>
    </location>
    <ligand>
        <name>Mg(2+)</name>
        <dbReference type="ChEBI" id="CHEBI:18420"/>
        <label>1</label>
    </ligand>
</feature>
<feature type="binding site" evidence="1">
    <location>
        <position position="1030"/>
    </location>
    <ligand>
        <name>Mg(2+)</name>
        <dbReference type="ChEBI" id="CHEBI:18420"/>
        <label>1</label>
    </ligand>
</feature>
<feature type="binding site" evidence="1">
    <location>
        <position position="1030"/>
    </location>
    <ligand>
        <name>Mg(2+)</name>
        <dbReference type="ChEBI" id="CHEBI:18420"/>
        <label>2</label>
    </ligand>
</feature>
<proteinExistence type="inferred from homology"/>
<accession>A3Q0V0</accession>
<reference key="1">
    <citation type="submission" date="2007-02" db="EMBL/GenBank/DDBJ databases">
        <title>Complete sequence of Mycobacterium sp. JLS.</title>
        <authorList>
            <consortium name="US DOE Joint Genome Institute"/>
            <person name="Copeland A."/>
            <person name="Lucas S."/>
            <person name="Lapidus A."/>
            <person name="Barry K."/>
            <person name="Detter J.C."/>
            <person name="Glavina del Rio T."/>
            <person name="Hammon N."/>
            <person name="Israni S."/>
            <person name="Dalin E."/>
            <person name="Tice H."/>
            <person name="Pitluck S."/>
            <person name="Chain P."/>
            <person name="Malfatti S."/>
            <person name="Shin M."/>
            <person name="Vergez L."/>
            <person name="Schmutz J."/>
            <person name="Larimer F."/>
            <person name="Land M."/>
            <person name="Hauser L."/>
            <person name="Kyrpides N."/>
            <person name="Mikhailova N."/>
            <person name="Miller C.D."/>
            <person name="Anderson A.J."/>
            <person name="Sims R.C."/>
            <person name="Richardson P."/>
        </authorList>
    </citation>
    <scope>NUCLEOTIDE SEQUENCE [LARGE SCALE GENOMIC DNA]</scope>
    <source>
        <strain>JLS</strain>
    </source>
</reference>
<comment type="function">
    <text evidence="1">Catalyzes the production of L-lysyl-tRNA(Lys)transfer and the transfer of a lysyl group from L-lysyl-tRNA(Lys) to membrane-bound phosphatidylglycerol (PG), which produces lysylphosphatidylglycerol (LPG), one of the components of the bacterial membrane with a positive net charge. LPG synthesis contributes to the resistance to cationic antimicrobial peptides (CAMPs) and likely protects M.tuberculosis against the CAMPs produced by competiting microorganisms (bacteriocins). In fact, the modification of anionic phosphatidylglycerol with positively charged L-lysine results in repulsion of the peptides (By similarity).</text>
</comment>
<comment type="catalytic activity">
    <reaction>
        <text>tRNA(Lys) + L-lysine + ATP = L-lysyl-tRNA(Lys) + AMP + diphosphate</text>
        <dbReference type="Rhea" id="RHEA:20792"/>
        <dbReference type="Rhea" id="RHEA-COMP:9696"/>
        <dbReference type="Rhea" id="RHEA-COMP:9697"/>
        <dbReference type="ChEBI" id="CHEBI:30616"/>
        <dbReference type="ChEBI" id="CHEBI:32551"/>
        <dbReference type="ChEBI" id="CHEBI:33019"/>
        <dbReference type="ChEBI" id="CHEBI:78442"/>
        <dbReference type="ChEBI" id="CHEBI:78529"/>
        <dbReference type="ChEBI" id="CHEBI:456215"/>
        <dbReference type="EC" id="6.1.1.6"/>
    </reaction>
</comment>
<comment type="catalytic activity">
    <reaction>
        <text>L-lysyl-tRNA(Lys) + a 1,2-diacyl-sn-glycero-3-phospho-(1'-sn-glycerol) = a 1,2-diacyl-sn-glycero-3-phospho-1'-(3'-O-L-lysyl)-sn-glycerol + tRNA(Lys)</text>
        <dbReference type="Rhea" id="RHEA:10668"/>
        <dbReference type="Rhea" id="RHEA-COMP:9696"/>
        <dbReference type="Rhea" id="RHEA-COMP:9697"/>
        <dbReference type="ChEBI" id="CHEBI:64716"/>
        <dbReference type="ChEBI" id="CHEBI:75792"/>
        <dbReference type="ChEBI" id="CHEBI:78442"/>
        <dbReference type="ChEBI" id="CHEBI:78529"/>
        <dbReference type="EC" id="2.3.2.3"/>
    </reaction>
</comment>
<comment type="cofactor">
    <cofactor evidence="1">
        <name>Mg(2+)</name>
        <dbReference type="ChEBI" id="CHEBI:18420"/>
    </cofactor>
    <text evidence="1">Binds 3 Mg(2+) ions per subunit.</text>
</comment>
<comment type="subcellular location">
    <subcellularLocation>
        <location evidence="3">Cell membrane</location>
        <topology evidence="3">Multi-pass membrane protein</topology>
    </subcellularLocation>
</comment>
<comment type="similarity">
    <text evidence="3">In the N-terminal section; belongs to the LPG synthetase family.</text>
</comment>
<comment type="similarity">
    <text evidence="3">In the C-terminal section; belongs to the class-II aminoacyl-tRNA synthetase family.</text>
</comment>
<keyword id="KW-0030">Aminoacyl-tRNA synthetase</keyword>
<keyword id="KW-0046">Antibiotic resistance</keyword>
<keyword id="KW-0067">ATP-binding</keyword>
<keyword id="KW-1003">Cell membrane</keyword>
<keyword id="KW-0238">DNA-binding</keyword>
<keyword id="KW-0436">Ligase</keyword>
<keyword id="KW-0443">Lipid metabolism</keyword>
<keyword id="KW-0460">Magnesium</keyword>
<keyword id="KW-0472">Membrane</keyword>
<keyword id="KW-0479">Metal-binding</keyword>
<keyword id="KW-0511">Multifunctional enzyme</keyword>
<keyword id="KW-0547">Nucleotide-binding</keyword>
<keyword id="KW-0808">Transferase</keyword>
<keyword id="KW-0812">Transmembrane</keyword>
<keyword id="KW-1133">Transmembrane helix</keyword>
<name>LYSX_MYCSJ</name>
<organism>
    <name type="scientific">Mycobacterium sp. (strain JLS)</name>
    <dbReference type="NCBI Taxonomy" id="164757"/>
    <lineage>
        <taxon>Bacteria</taxon>
        <taxon>Bacillati</taxon>
        <taxon>Actinomycetota</taxon>
        <taxon>Actinomycetes</taxon>
        <taxon>Mycobacteriales</taxon>
        <taxon>Mycobacteriaceae</taxon>
        <taxon>Mycobacterium</taxon>
    </lineage>
</organism>
<sequence length="1111" mass="121824">MTLTSPPRTRADSRHSWVPAAAGWTVGVIATLSLIASVSPLVRWIIRVPREFVNDYIFNFPDTSFAWAFVLALLAGALAARKRIAWWILLLYMVAAVGWNVADLLTGDESVVEEMGEVIGLAFHLAAVAFLLLARPLFWARVRRGALFKAAGVLAAGMAVGVLVGWGLLELFPGDLERDYRLAYAANRVFAFAGVDPDAFDGQHPHVVVNALLGLFGALALMAAAIVLFQSQRSENALTGEDESAIRGLLELYGKNDSLGYFATRRDKSVVFAPNGRAAITYRVEVGVCLASGDPVGDPKAWPQAIDAWLALCGTYGWAPGVMGASVGGAEAFRAAGLSAIQLGDEAILHPDSFRLSGPDMRAVRQAVTRARRAGVTVRIRRHRELSPEQMAEVIAHADAWRDTETERGFSMALGRLGDPADSDCLLVEAVQGETGGERSDPGSGTVVAMLSLVPWGSNGASLDVMRRSPQSPNGTIELMVSELCMQAEDIGVTRISLNFAMFRSAFEQGAQLGAGPVARLWRWLLVFFSRWWQLETLYRSNMKYQPQWVPRYACYEDARLIPRVGVASVIAEGFLVLPFSRRNKQHTGHHTSAPQDLVASGVLHHDGTAPDMSGLRTDTADDEPPRLPEQVRVRMAKLKALQADGVDAYPVGRPPSHTAAAAVDSPDDVELDVAGRVLRIRDYGGVLFAQLRDWSGEVQLLLDNSTLEQGSTADFTAAIDLGDLIEATGTMGYSKNGTRSLLVRHWRLTGKCLRPLPDKWKGLTDQEARVRARYVDLAVNTEARDLIRARSGVLHAIRDTLYHKGFLEVETPILQQIHGGANARPFLTHINAYDLDLYLRIAPELYLKRLCVGGVERVFELGRAFRNEGVDFSHNPEFTLLEAYQAHADYHVWIDGCRELIQNAAMAANGEHVFLRPRDDGVLEPVDISGPWTVKTVHDAVSEALGEHIDAATELPTLRKLADAAGIPYLTHWDEGAVVLEMYEHLVEDRTEKPTFYKDFPTSVSPLTRPHRSIAGVAERWDLVAWGVELGTAYSELTDPVEQRRRLQAQSLLAAGGDPEAMELDEDFLQAMEYAMPPTGGLGMGVDRVVMLITGRSIRETLPFPLARPR</sequence>
<dbReference type="EC" id="6.1.1.6"/>
<dbReference type="EC" id="2.3.2.3"/>
<dbReference type="EMBL" id="CP000580">
    <property type="protein sequence ID" value="ABN98777.1"/>
    <property type="molecule type" value="Genomic_DNA"/>
</dbReference>
<dbReference type="SMR" id="A3Q0V0"/>
<dbReference type="KEGG" id="mjl:Mjls_2998"/>
<dbReference type="HOGENOM" id="CLU_008255_2_1_11"/>
<dbReference type="BioCyc" id="MSP164757:G1G8C-3021-MONOMER"/>
<dbReference type="GO" id="GO:0005829">
    <property type="term" value="C:cytosol"/>
    <property type="evidence" value="ECO:0007669"/>
    <property type="project" value="TreeGrafter"/>
</dbReference>
<dbReference type="GO" id="GO:0005886">
    <property type="term" value="C:plasma membrane"/>
    <property type="evidence" value="ECO:0007669"/>
    <property type="project" value="UniProtKB-SubCell"/>
</dbReference>
<dbReference type="GO" id="GO:0005524">
    <property type="term" value="F:ATP binding"/>
    <property type="evidence" value="ECO:0007669"/>
    <property type="project" value="UniProtKB-UniRule"/>
</dbReference>
<dbReference type="GO" id="GO:0003677">
    <property type="term" value="F:DNA binding"/>
    <property type="evidence" value="ECO:0007669"/>
    <property type="project" value="UniProtKB-KW"/>
</dbReference>
<dbReference type="GO" id="GO:0004824">
    <property type="term" value="F:lysine-tRNA ligase activity"/>
    <property type="evidence" value="ECO:0007669"/>
    <property type="project" value="UniProtKB-UniRule"/>
</dbReference>
<dbReference type="GO" id="GO:0000287">
    <property type="term" value="F:magnesium ion binding"/>
    <property type="evidence" value="ECO:0007669"/>
    <property type="project" value="UniProtKB-UniRule"/>
</dbReference>
<dbReference type="GO" id="GO:0050071">
    <property type="term" value="F:phosphatidylglycerol lysyltransferase activity"/>
    <property type="evidence" value="ECO:0007669"/>
    <property type="project" value="UniProtKB-EC"/>
</dbReference>
<dbReference type="GO" id="GO:0000049">
    <property type="term" value="F:tRNA binding"/>
    <property type="evidence" value="ECO:0007669"/>
    <property type="project" value="TreeGrafter"/>
</dbReference>
<dbReference type="GO" id="GO:0006629">
    <property type="term" value="P:lipid metabolic process"/>
    <property type="evidence" value="ECO:0007669"/>
    <property type="project" value="UniProtKB-KW"/>
</dbReference>
<dbReference type="GO" id="GO:0006430">
    <property type="term" value="P:lysyl-tRNA aminoacylation"/>
    <property type="evidence" value="ECO:0007669"/>
    <property type="project" value="UniProtKB-UniRule"/>
</dbReference>
<dbReference type="GO" id="GO:0046677">
    <property type="term" value="P:response to antibiotic"/>
    <property type="evidence" value="ECO:0007669"/>
    <property type="project" value="UniProtKB-KW"/>
</dbReference>
<dbReference type="CDD" id="cd04322">
    <property type="entry name" value="LysRS_N"/>
    <property type="match status" value="1"/>
</dbReference>
<dbReference type="Gene3D" id="3.30.930.10">
    <property type="entry name" value="Bira Bifunctional Protein, Domain 2"/>
    <property type="match status" value="1"/>
</dbReference>
<dbReference type="Gene3D" id="2.40.50.140">
    <property type="entry name" value="Nucleic acid-binding proteins"/>
    <property type="match status" value="1"/>
</dbReference>
<dbReference type="HAMAP" id="MF_00252">
    <property type="entry name" value="Lys_tRNA_synth_class2"/>
    <property type="match status" value="1"/>
</dbReference>
<dbReference type="InterPro" id="IPR004364">
    <property type="entry name" value="Aa-tRNA-synt_II"/>
</dbReference>
<dbReference type="InterPro" id="IPR006195">
    <property type="entry name" value="aa-tRNA-synth_II"/>
</dbReference>
<dbReference type="InterPro" id="IPR045864">
    <property type="entry name" value="aa-tRNA-synth_II/BPL/LPL"/>
</dbReference>
<dbReference type="InterPro" id="IPR024320">
    <property type="entry name" value="LPG_synthase_C"/>
</dbReference>
<dbReference type="InterPro" id="IPR002313">
    <property type="entry name" value="Lys-tRNA-ligase_II"/>
</dbReference>
<dbReference type="InterPro" id="IPR044136">
    <property type="entry name" value="Lys-tRNA-ligase_II_N"/>
</dbReference>
<dbReference type="InterPro" id="IPR018149">
    <property type="entry name" value="Lys-tRNA-synth_II_C"/>
</dbReference>
<dbReference type="InterPro" id="IPR012340">
    <property type="entry name" value="NA-bd_OB-fold"/>
</dbReference>
<dbReference type="InterPro" id="IPR004365">
    <property type="entry name" value="NA-bd_OB_tRNA"/>
</dbReference>
<dbReference type="InterPro" id="IPR031553">
    <property type="entry name" value="tRNA-synt_2_TM"/>
</dbReference>
<dbReference type="NCBIfam" id="TIGR00499">
    <property type="entry name" value="lysS_bact"/>
    <property type="match status" value="1"/>
</dbReference>
<dbReference type="NCBIfam" id="NF001756">
    <property type="entry name" value="PRK00484.1"/>
    <property type="match status" value="1"/>
</dbReference>
<dbReference type="NCBIfam" id="NF002821">
    <property type="entry name" value="PRK02983.1"/>
    <property type="match status" value="1"/>
</dbReference>
<dbReference type="PANTHER" id="PTHR42918:SF15">
    <property type="entry name" value="LYSINE--TRNA LIGASE, CHLOROPLASTIC_MITOCHONDRIAL"/>
    <property type="match status" value="1"/>
</dbReference>
<dbReference type="PANTHER" id="PTHR42918">
    <property type="entry name" value="LYSYL-TRNA SYNTHETASE"/>
    <property type="match status" value="1"/>
</dbReference>
<dbReference type="Pfam" id="PF09924">
    <property type="entry name" value="LPG_synthase_C"/>
    <property type="match status" value="1"/>
</dbReference>
<dbReference type="Pfam" id="PF00152">
    <property type="entry name" value="tRNA-synt_2"/>
    <property type="match status" value="1"/>
</dbReference>
<dbReference type="Pfam" id="PF16995">
    <property type="entry name" value="tRNA-synt_2_TM"/>
    <property type="match status" value="1"/>
</dbReference>
<dbReference type="Pfam" id="PF01336">
    <property type="entry name" value="tRNA_anti-codon"/>
    <property type="match status" value="1"/>
</dbReference>
<dbReference type="PRINTS" id="PR00982">
    <property type="entry name" value="TRNASYNTHLYS"/>
</dbReference>
<dbReference type="SUPFAM" id="SSF55681">
    <property type="entry name" value="Class II aaRS and biotin synthetases"/>
    <property type="match status" value="1"/>
</dbReference>
<dbReference type="SUPFAM" id="SSF50249">
    <property type="entry name" value="Nucleic acid-binding proteins"/>
    <property type="match status" value="1"/>
</dbReference>
<dbReference type="PROSITE" id="PS50862">
    <property type="entry name" value="AA_TRNA_LIGASE_II"/>
    <property type="match status" value="1"/>
</dbReference>
<evidence type="ECO:0000250" key="1"/>
<evidence type="ECO:0000255" key="2"/>
<evidence type="ECO:0000305" key="3"/>
<protein>
    <recommendedName>
        <fullName>Lysylphosphatidylglycerol biosynthesis bifunctional protein LysX</fullName>
    </recommendedName>
    <domain>
        <recommendedName>
            <fullName>Lysine--tRNA ligase</fullName>
            <ecNumber>6.1.1.6</ecNumber>
        </recommendedName>
        <alternativeName>
            <fullName>Lysyl-tRNA synthetase</fullName>
            <shortName>LysRS</shortName>
        </alternativeName>
    </domain>
    <domain>
        <recommendedName>
            <fullName>Phosphatidylglycerol lysyltransferase</fullName>
            <ecNumber>2.3.2.3</ecNumber>
        </recommendedName>
        <alternativeName>
            <fullName>Lysylphosphatidylglycerol synthetase</fullName>
            <shortName>LPG synthetase</shortName>
        </alternativeName>
    </domain>
</protein>
<gene>
    <name type="primary">lysX</name>
    <name type="ordered locus">Mjls_2998</name>
</gene>